<name>BTG1_CHICK</name>
<gene>
    <name type="primary">BTG1</name>
</gene>
<dbReference type="EMBL" id="X64146">
    <property type="protein sequence ID" value="CAA45507.1"/>
    <property type="molecule type" value="mRNA"/>
</dbReference>
<dbReference type="PIR" id="I50585">
    <property type="entry name" value="S19961"/>
</dbReference>
<dbReference type="RefSeq" id="NP_990681.1">
    <property type="nucleotide sequence ID" value="NM_205350.2"/>
</dbReference>
<dbReference type="SMR" id="P34743"/>
<dbReference type="FunCoup" id="P34743">
    <property type="interactions" value="353"/>
</dbReference>
<dbReference type="STRING" id="9031.ENSGALP00000059170"/>
<dbReference type="PaxDb" id="9031-ENSGALP00000018378"/>
<dbReference type="Ensembl" id="ENSGALT00010032153.1">
    <property type="protein sequence ID" value="ENSGALP00010018942.1"/>
    <property type="gene ID" value="ENSGALG00010013359.1"/>
</dbReference>
<dbReference type="GeneID" id="396295"/>
<dbReference type="KEGG" id="gga:396295"/>
<dbReference type="CTD" id="694"/>
<dbReference type="VEuPathDB" id="HostDB:geneid_396295"/>
<dbReference type="eggNOG" id="KOG4006">
    <property type="taxonomic scope" value="Eukaryota"/>
</dbReference>
<dbReference type="HOGENOM" id="CLU_079660_4_0_1"/>
<dbReference type="InParanoid" id="P34743"/>
<dbReference type="OMA" id="SHWFPDK"/>
<dbReference type="OrthoDB" id="19928at2759"/>
<dbReference type="PhylomeDB" id="P34743"/>
<dbReference type="TreeFam" id="TF105272"/>
<dbReference type="PRO" id="PR:P34743"/>
<dbReference type="Proteomes" id="UP000000539">
    <property type="component" value="Chromosome 1"/>
</dbReference>
<dbReference type="GO" id="GO:0005737">
    <property type="term" value="C:cytoplasm"/>
    <property type="evidence" value="ECO:0000250"/>
    <property type="project" value="UniProtKB"/>
</dbReference>
<dbReference type="GO" id="GO:0005634">
    <property type="term" value="C:nucleus"/>
    <property type="evidence" value="ECO:0000250"/>
    <property type="project" value="UniProtKB"/>
</dbReference>
<dbReference type="GO" id="GO:0019899">
    <property type="term" value="F:enzyme binding"/>
    <property type="evidence" value="ECO:0000250"/>
    <property type="project" value="UniProtKB"/>
</dbReference>
<dbReference type="GO" id="GO:0008285">
    <property type="term" value="P:negative regulation of cell population proliferation"/>
    <property type="evidence" value="ECO:0000250"/>
    <property type="project" value="UniProtKB"/>
</dbReference>
<dbReference type="GO" id="GO:0045766">
    <property type="term" value="P:positive regulation of angiogenesis"/>
    <property type="evidence" value="ECO:0000250"/>
    <property type="project" value="UniProtKB"/>
</dbReference>
<dbReference type="GO" id="GO:0045603">
    <property type="term" value="P:positive regulation of endothelial cell differentiation"/>
    <property type="evidence" value="ECO:0000250"/>
    <property type="project" value="UniProtKB"/>
</dbReference>
<dbReference type="GO" id="GO:2000271">
    <property type="term" value="P:positive regulation of fibroblast apoptotic process"/>
    <property type="evidence" value="ECO:0000250"/>
    <property type="project" value="UniProtKB"/>
</dbReference>
<dbReference type="FunFam" id="3.90.640.90:FF:000003">
    <property type="entry name" value="BTG1 isoform 1"/>
    <property type="match status" value="1"/>
</dbReference>
<dbReference type="Gene3D" id="3.90.640.90">
    <property type="entry name" value="Anti-proliferative protein, N-terminal domain"/>
    <property type="match status" value="1"/>
</dbReference>
<dbReference type="InterPro" id="IPR002087">
    <property type="entry name" value="Anti_prolifrtn"/>
</dbReference>
<dbReference type="InterPro" id="IPR033332">
    <property type="entry name" value="BTG"/>
</dbReference>
<dbReference type="InterPro" id="IPR036054">
    <property type="entry name" value="BTG-like_sf"/>
</dbReference>
<dbReference type="PANTHER" id="PTHR22978">
    <property type="entry name" value="B-CELL TRANSLOCATION GENE"/>
    <property type="match status" value="1"/>
</dbReference>
<dbReference type="PANTHER" id="PTHR22978:SF30">
    <property type="entry name" value="PROTEIN BTG1"/>
    <property type="match status" value="1"/>
</dbReference>
<dbReference type="Pfam" id="PF07742">
    <property type="entry name" value="BTG"/>
    <property type="match status" value="1"/>
</dbReference>
<dbReference type="PRINTS" id="PR00310">
    <property type="entry name" value="ANTIPRLFBTG1"/>
</dbReference>
<dbReference type="SMART" id="SM00099">
    <property type="entry name" value="btg1"/>
    <property type="match status" value="1"/>
</dbReference>
<dbReference type="SUPFAM" id="SSF160696">
    <property type="entry name" value="BTG domain-like"/>
    <property type="match status" value="1"/>
</dbReference>
<dbReference type="PROSITE" id="PS00960">
    <property type="entry name" value="BTG_1"/>
    <property type="match status" value="1"/>
</dbReference>
<dbReference type="PROSITE" id="PS01203">
    <property type="entry name" value="BTG_2"/>
    <property type="match status" value="1"/>
</dbReference>
<sequence>MHPALYTRASMIREIAAAVAFISKFLRTKGLMNERQLQTFSQSLQELLAEHYKHHWFPEKPCKGSGYRCIRINHKMDPLIGQAAQRIGLSSQELFQLLPSELTLWVDPYEVSYRIGEDGSICVLYEAAPAGGSQNNTNMQMVDSRISCKEELLLGRTSPSKSYNMMTVSG</sequence>
<proteinExistence type="evidence at transcript level"/>
<keyword id="KW-1185">Reference proteome</keyword>
<comment type="function">
    <text>Anti-proliferative protein.</text>
</comment>
<comment type="developmental stage">
    <text>Its expression is associated with the early G1 phase of the cell cycle.</text>
</comment>
<comment type="similarity">
    <text evidence="1">Belongs to the BTG family.</text>
</comment>
<feature type="chain" id="PRO_0000143803" description="Protein BTG1">
    <location>
        <begin position="1"/>
        <end position="170"/>
    </location>
</feature>
<evidence type="ECO:0000305" key="1"/>
<accession>P34743</accession>
<protein>
    <recommendedName>
        <fullName>Protein BTG1</fullName>
    </recommendedName>
    <alternativeName>
        <fullName>B-cell translocation gene 1 protein</fullName>
    </alternativeName>
</protein>
<reference key="1">
    <citation type="journal article" date="1993" name="Gene">
        <title>Sequence analysis reveals that the BTG1 anti-proliferative gene is conserved throughout evolution in its coding and 3' non-coding regions.</title>
        <authorList>
            <person name="Rouault J.-P."/>
            <person name="Samarut C."/>
            <person name="Duret L."/>
            <person name="Tessa C."/>
            <person name="Samarut J."/>
            <person name="Magaud J.-P."/>
        </authorList>
    </citation>
    <scope>NUCLEOTIDE SEQUENCE [MRNA]</scope>
</reference>
<organism>
    <name type="scientific">Gallus gallus</name>
    <name type="common">Chicken</name>
    <dbReference type="NCBI Taxonomy" id="9031"/>
    <lineage>
        <taxon>Eukaryota</taxon>
        <taxon>Metazoa</taxon>
        <taxon>Chordata</taxon>
        <taxon>Craniata</taxon>
        <taxon>Vertebrata</taxon>
        <taxon>Euteleostomi</taxon>
        <taxon>Archelosauria</taxon>
        <taxon>Archosauria</taxon>
        <taxon>Dinosauria</taxon>
        <taxon>Saurischia</taxon>
        <taxon>Theropoda</taxon>
        <taxon>Coelurosauria</taxon>
        <taxon>Aves</taxon>
        <taxon>Neognathae</taxon>
        <taxon>Galloanserae</taxon>
        <taxon>Galliformes</taxon>
        <taxon>Phasianidae</taxon>
        <taxon>Phasianinae</taxon>
        <taxon>Gallus</taxon>
    </lineage>
</organism>